<sequence>MEFEFIKNTLLGEYAVRCNMEHQIVGRWLQEEIGQDLAKLKHVLTLIDKAEQSPAQEFLWTGREISLLVQGDEITVQENALAYESEHELETDFALYDSESIAACGREDFVALLTQWQSFIQNQGRF</sequence>
<gene>
    <name type="ordered locus">VC_0605</name>
</gene>
<comment type="similarity">
    <text evidence="1">Belongs to the UPF0231 family.</text>
</comment>
<feature type="chain" id="PRO_0000214659" description="UPF0231 protein VC_0605">
    <location>
        <begin position="1"/>
        <end position="126"/>
    </location>
</feature>
<proteinExistence type="inferred from homology"/>
<reference key="1">
    <citation type="journal article" date="2000" name="Nature">
        <title>DNA sequence of both chromosomes of the cholera pathogen Vibrio cholerae.</title>
        <authorList>
            <person name="Heidelberg J.F."/>
            <person name="Eisen J.A."/>
            <person name="Nelson W.C."/>
            <person name="Clayton R.A."/>
            <person name="Gwinn M.L."/>
            <person name="Dodson R.J."/>
            <person name="Haft D.H."/>
            <person name="Hickey E.K."/>
            <person name="Peterson J.D."/>
            <person name="Umayam L.A."/>
            <person name="Gill S.R."/>
            <person name="Nelson K.E."/>
            <person name="Read T.D."/>
            <person name="Tettelin H."/>
            <person name="Richardson D.L."/>
            <person name="Ermolaeva M.D."/>
            <person name="Vamathevan J.J."/>
            <person name="Bass S."/>
            <person name="Qin H."/>
            <person name="Dragoi I."/>
            <person name="Sellers P."/>
            <person name="McDonald L.A."/>
            <person name="Utterback T.R."/>
            <person name="Fleischmann R.D."/>
            <person name="Nierman W.C."/>
            <person name="White O."/>
            <person name="Salzberg S.L."/>
            <person name="Smith H.O."/>
            <person name="Colwell R.R."/>
            <person name="Mekalanos J.J."/>
            <person name="Venter J.C."/>
            <person name="Fraser C.M."/>
        </authorList>
    </citation>
    <scope>NUCLEOTIDE SEQUENCE [LARGE SCALE GENOMIC DNA]</scope>
    <source>
        <strain>ATCC 39315 / El Tor Inaba N16961</strain>
    </source>
</reference>
<name>Y605_VIBCH</name>
<protein>
    <recommendedName>
        <fullName evidence="1">UPF0231 protein VC_0605</fullName>
    </recommendedName>
</protein>
<accession>Q9KUB7</accession>
<organism>
    <name type="scientific">Vibrio cholerae serotype O1 (strain ATCC 39315 / El Tor Inaba N16961)</name>
    <dbReference type="NCBI Taxonomy" id="243277"/>
    <lineage>
        <taxon>Bacteria</taxon>
        <taxon>Pseudomonadati</taxon>
        <taxon>Pseudomonadota</taxon>
        <taxon>Gammaproteobacteria</taxon>
        <taxon>Vibrionales</taxon>
        <taxon>Vibrionaceae</taxon>
        <taxon>Vibrio</taxon>
    </lineage>
</organism>
<dbReference type="EMBL" id="AE003852">
    <property type="protein sequence ID" value="AAF93772.1"/>
    <property type="molecule type" value="Genomic_DNA"/>
</dbReference>
<dbReference type="PIR" id="A82302">
    <property type="entry name" value="A82302"/>
</dbReference>
<dbReference type="RefSeq" id="NP_230255.1">
    <property type="nucleotide sequence ID" value="NC_002505.1"/>
</dbReference>
<dbReference type="RefSeq" id="WP_000393917.1">
    <property type="nucleotide sequence ID" value="NZ_LT906614.1"/>
</dbReference>
<dbReference type="STRING" id="243277.VC_0605"/>
<dbReference type="DNASU" id="2615393"/>
<dbReference type="EnsemblBacteria" id="AAF93772">
    <property type="protein sequence ID" value="AAF93772"/>
    <property type="gene ID" value="VC_0605"/>
</dbReference>
<dbReference type="KEGG" id="vch:VC_0605"/>
<dbReference type="PATRIC" id="fig|243277.26.peg.575"/>
<dbReference type="eggNOG" id="COG3112">
    <property type="taxonomic scope" value="Bacteria"/>
</dbReference>
<dbReference type="HOGENOM" id="CLU_139226_0_0_6"/>
<dbReference type="Proteomes" id="UP000000584">
    <property type="component" value="Chromosome 1"/>
</dbReference>
<dbReference type="HAMAP" id="MF_01053">
    <property type="entry name" value="UPF0231"/>
    <property type="match status" value="1"/>
</dbReference>
<dbReference type="InterPro" id="IPR008249">
    <property type="entry name" value="UPF0231"/>
</dbReference>
<dbReference type="NCBIfam" id="NF003577">
    <property type="entry name" value="PRK05248.2-1"/>
    <property type="match status" value="1"/>
</dbReference>
<dbReference type="Pfam" id="PF06062">
    <property type="entry name" value="UPF0231"/>
    <property type="match status" value="1"/>
</dbReference>
<dbReference type="PIRSF" id="PIRSF006287">
    <property type="entry name" value="UCP006287"/>
    <property type="match status" value="1"/>
</dbReference>
<evidence type="ECO:0000255" key="1">
    <source>
        <dbReference type="HAMAP-Rule" id="MF_01053"/>
    </source>
</evidence>
<keyword id="KW-1185">Reference proteome</keyword>